<sequence length="345" mass="37672">MNPITFSVVLTSLASEQFLAVSSSHWLLAWMGLEINTLAIIPLMTQHKHPRAIEASTKYFLTQAAASALLLFSSLNNAWLTGEWSILDLTNPLSCATMTIAICMKLGLAPFHFWLPEVLQGLSLTTGLILSTWQKLAPMAILYQIAPMLNTPLLLTLGLTSTLIGGWGGLNQTQLRKILAFSSIAHLGWMISILPFSPQLMILNLTIYLIMTSTMFLVLKTISSTKISSLATSWSKTPSTTALSLLTLLSLGGLPPLSGFVPKWFIIQELTSQNTTILATTLALSALLSLFFYLRLTYIVTLTSSPNTSNASLTWRHHSKQPTLLLSIALILSSFIIPISPLTLT</sequence>
<keyword id="KW-0249">Electron transport</keyword>
<keyword id="KW-0472">Membrane</keyword>
<keyword id="KW-0496">Mitochondrion</keyword>
<keyword id="KW-0999">Mitochondrion inner membrane</keyword>
<keyword id="KW-0520">NAD</keyword>
<keyword id="KW-1185">Reference proteome</keyword>
<keyword id="KW-0679">Respiratory chain</keyword>
<keyword id="KW-1278">Translocase</keyword>
<keyword id="KW-0812">Transmembrane</keyword>
<keyword id="KW-1133">Transmembrane helix</keyword>
<keyword id="KW-0813">Transport</keyword>
<keyword id="KW-0830">Ubiquinone</keyword>
<evidence type="ECO:0000250" key="1">
    <source>
        <dbReference type="UniProtKB" id="P03891"/>
    </source>
</evidence>
<evidence type="ECO:0000250" key="2">
    <source>
        <dbReference type="UniProtKB" id="P03892"/>
    </source>
</evidence>
<evidence type="ECO:0000255" key="3"/>
<evidence type="ECO:0000305" key="4"/>
<feature type="chain" id="PRO_0000117648" description="NADH-ubiquinone oxidoreductase chain 2">
    <location>
        <begin position="1"/>
        <end position="345"/>
    </location>
</feature>
<feature type="transmembrane region" description="Helical" evidence="3">
    <location>
        <begin position="25"/>
        <end position="45"/>
    </location>
</feature>
<feature type="transmembrane region" description="Helical" evidence="3">
    <location>
        <begin position="60"/>
        <end position="80"/>
    </location>
</feature>
<feature type="transmembrane region" description="Helical" evidence="3">
    <location>
        <begin position="99"/>
        <end position="119"/>
    </location>
</feature>
<feature type="transmembrane region" description="Helical" evidence="3">
    <location>
        <begin position="149"/>
        <end position="171"/>
    </location>
</feature>
<feature type="transmembrane region" description="Helical" evidence="3">
    <location>
        <begin position="178"/>
        <end position="198"/>
    </location>
</feature>
<feature type="transmembrane region" description="Helical" evidence="3">
    <location>
        <begin position="199"/>
        <end position="219"/>
    </location>
</feature>
<feature type="transmembrane region" description="Helical" evidence="3">
    <location>
        <begin position="242"/>
        <end position="262"/>
    </location>
</feature>
<feature type="transmembrane region" description="Helical" evidence="3">
    <location>
        <begin position="282"/>
        <end position="302"/>
    </location>
</feature>
<feature type="transmembrane region" description="Helical" evidence="3">
    <location>
        <begin position="324"/>
        <end position="344"/>
    </location>
</feature>
<accession>P03894</accession>
<name>NU2M_XENLA</name>
<gene>
    <name type="primary">mt-nd2</name>
    <name type="synonym">mtnd2</name>
    <name type="synonym">nadh2</name>
    <name type="synonym">nd2</name>
</gene>
<reference key="1">
    <citation type="journal article" date="1985" name="J. Biol. Chem.">
        <title>The complete nucleotide sequence of the Xenopus laevis mitochondrial genome.</title>
        <authorList>
            <person name="Roe B.A."/>
            <person name="Ma D.-P."/>
            <person name="Wilson R.K."/>
            <person name="Wong J.F.-H."/>
        </authorList>
    </citation>
    <scope>NUCLEOTIDE SEQUENCE [GENOMIC DNA]</scope>
</reference>
<proteinExistence type="inferred from homology"/>
<protein>
    <recommendedName>
        <fullName>NADH-ubiquinone oxidoreductase chain 2</fullName>
        <ecNumber evidence="1">7.1.1.2</ecNumber>
    </recommendedName>
    <alternativeName>
        <fullName>NADH dehydrogenase subunit 2</fullName>
    </alternativeName>
</protein>
<dbReference type="EC" id="7.1.1.2" evidence="1"/>
<dbReference type="EMBL" id="M10217">
    <property type="protein sequence ID" value="AAA66459.1"/>
    <property type="molecule type" value="Genomic_DNA"/>
</dbReference>
<dbReference type="PIR" id="A00417">
    <property type="entry name" value="QXXL2M"/>
</dbReference>
<dbReference type="RefSeq" id="NP_008135.1">
    <property type="nucleotide sequence ID" value="NC_001573.1"/>
</dbReference>
<dbReference type="SMR" id="P03894"/>
<dbReference type="GeneID" id="2642087"/>
<dbReference type="KEGG" id="xla:2642087"/>
<dbReference type="CTD" id="4536"/>
<dbReference type="OrthoDB" id="4092844at2759"/>
<dbReference type="Proteomes" id="UP000186698">
    <property type="component" value="Mitochondrion MT"/>
</dbReference>
<dbReference type="Bgee" id="2642087">
    <property type="expression patterns" value="Expressed in egg cell and 19 other cell types or tissues"/>
</dbReference>
<dbReference type="GO" id="GO:0005743">
    <property type="term" value="C:mitochondrial inner membrane"/>
    <property type="evidence" value="ECO:0000250"/>
    <property type="project" value="UniProtKB"/>
</dbReference>
<dbReference type="GO" id="GO:0045271">
    <property type="term" value="C:respiratory chain complex I"/>
    <property type="evidence" value="ECO:0000318"/>
    <property type="project" value="GO_Central"/>
</dbReference>
<dbReference type="GO" id="GO:0008137">
    <property type="term" value="F:NADH dehydrogenase (ubiquinone) activity"/>
    <property type="evidence" value="ECO:0000250"/>
    <property type="project" value="UniProtKB"/>
</dbReference>
<dbReference type="GO" id="GO:0006120">
    <property type="term" value="P:mitochondrial electron transport, NADH to ubiquinone"/>
    <property type="evidence" value="ECO:0000250"/>
    <property type="project" value="UniProtKB"/>
</dbReference>
<dbReference type="GO" id="GO:0032981">
    <property type="term" value="P:mitochondrial respiratory chain complex I assembly"/>
    <property type="evidence" value="ECO:0000250"/>
    <property type="project" value="UniProtKB"/>
</dbReference>
<dbReference type="InterPro" id="IPR050175">
    <property type="entry name" value="Complex_I_Subunit_2"/>
</dbReference>
<dbReference type="InterPro" id="IPR010933">
    <property type="entry name" value="NADH_DH_su2_C"/>
</dbReference>
<dbReference type="InterPro" id="IPR003917">
    <property type="entry name" value="NADH_UbQ_OxRdtase_chain2"/>
</dbReference>
<dbReference type="InterPro" id="IPR001750">
    <property type="entry name" value="ND/Mrp_TM"/>
</dbReference>
<dbReference type="PANTHER" id="PTHR46552">
    <property type="entry name" value="NADH-UBIQUINONE OXIDOREDUCTASE CHAIN 2"/>
    <property type="match status" value="1"/>
</dbReference>
<dbReference type="PANTHER" id="PTHR46552:SF1">
    <property type="entry name" value="NADH-UBIQUINONE OXIDOREDUCTASE CHAIN 2"/>
    <property type="match status" value="1"/>
</dbReference>
<dbReference type="Pfam" id="PF06444">
    <property type="entry name" value="NADH_dehy_S2_C"/>
    <property type="match status" value="1"/>
</dbReference>
<dbReference type="Pfam" id="PF00361">
    <property type="entry name" value="Proton_antipo_M"/>
    <property type="match status" value="1"/>
</dbReference>
<dbReference type="PRINTS" id="PR01436">
    <property type="entry name" value="NADHDHGNASE2"/>
</dbReference>
<geneLocation type="mitochondrion"/>
<comment type="function">
    <text evidence="1">Core subunit of the mitochondrial membrane respiratory chain NADH dehydrogenase (Complex I) which catalyzes electron transfer from NADH through the respiratory chain, using ubiquinone as an electron acceptor. Essential for the catalytic activity and assembly of complex I.</text>
</comment>
<comment type="catalytic activity">
    <reaction evidence="1">
        <text>a ubiquinone + NADH + 5 H(+)(in) = a ubiquinol + NAD(+) + 4 H(+)(out)</text>
        <dbReference type="Rhea" id="RHEA:29091"/>
        <dbReference type="Rhea" id="RHEA-COMP:9565"/>
        <dbReference type="Rhea" id="RHEA-COMP:9566"/>
        <dbReference type="ChEBI" id="CHEBI:15378"/>
        <dbReference type="ChEBI" id="CHEBI:16389"/>
        <dbReference type="ChEBI" id="CHEBI:17976"/>
        <dbReference type="ChEBI" id="CHEBI:57540"/>
        <dbReference type="ChEBI" id="CHEBI:57945"/>
        <dbReference type="EC" id="7.1.1.2"/>
    </reaction>
</comment>
<comment type="subunit">
    <text evidence="2">Core subunit of respiratory chain NADH dehydrogenase (Complex I) which is composed of 45 different subunits.</text>
</comment>
<comment type="subcellular location">
    <subcellularLocation>
        <location evidence="2">Mitochondrion inner membrane</location>
        <topology evidence="3">Multi-pass membrane protein</topology>
    </subcellularLocation>
</comment>
<comment type="similarity">
    <text evidence="4">Belongs to the complex I subunit 2 family.</text>
</comment>
<organism>
    <name type="scientific">Xenopus laevis</name>
    <name type="common">African clawed frog</name>
    <dbReference type="NCBI Taxonomy" id="8355"/>
    <lineage>
        <taxon>Eukaryota</taxon>
        <taxon>Metazoa</taxon>
        <taxon>Chordata</taxon>
        <taxon>Craniata</taxon>
        <taxon>Vertebrata</taxon>
        <taxon>Euteleostomi</taxon>
        <taxon>Amphibia</taxon>
        <taxon>Batrachia</taxon>
        <taxon>Anura</taxon>
        <taxon>Pipoidea</taxon>
        <taxon>Pipidae</taxon>
        <taxon>Xenopodinae</taxon>
        <taxon>Xenopus</taxon>
        <taxon>Xenopus</taxon>
    </lineage>
</organism>